<accession>P39700</accession>
<proteinExistence type="evidence at transcript level"/>
<comment type="function">
    <text evidence="1">Activator of the cell wall hydrolase AmiC. Required for septal murein cleavage and daughter cell separation during cell division (By similarity).</text>
</comment>
<comment type="subcellular location">
    <subcellularLocation>
        <location evidence="5">Cell inner membrane</location>
        <topology evidence="2">Lipid-anchor</topology>
    </subcellularLocation>
    <text evidence="1">Localizes at the septal ring.</text>
</comment>
<comment type="similarity">
    <text evidence="5">Belongs to the E.coli NlpD/Haemophilus LppB family.</text>
</comment>
<dbReference type="EMBL" id="AJ006131">
    <property type="protein sequence ID" value="CAA06881.1"/>
    <property type="molecule type" value="Genomic_DNA"/>
</dbReference>
<dbReference type="EMBL" id="X82129">
    <property type="protein sequence ID" value="CAA57639.1"/>
    <property type="molecule type" value="Genomic_DNA"/>
</dbReference>
<dbReference type="PIR" id="S49470">
    <property type="entry name" value="S49470"/>
</dbReference>
<dbReference type="SMR" id="P39700"/>
<dbReference type="PATRIC" id="fig|98360.39.peg.2646"/>
<dbReference type="OMA" id="YAHNDKI"/>
<dbReference type="GO" id="GO:0032153">
    <property type="term" value="C:cell division site"/>
    <property type="evidence" value="ECO:0007669"/>
    <property type="project" value="TreeGrafter"/>
</dbReference>
<dbReference type="GO" id="GO:0009279">
    <property type="term" value="C:cell outer membrane"/>
    <property type="evidence" value="ECO:0007669"/>
    <property type="project" value="TreeGrafter"/>
</dbReference>
<dbReference type="GO" id="GO:0005886">
    <property type="term" value="C:plasma membrane"/>
    <property type="evidence" value="ECO:0007669"/>
    <property type="project" value="UniProtKB-SubCell"/>
</dbReference>
<dbReference type="GO" id="GO:0004222">
    <property type="term" value="F:metalloendopeptidase activity"/>
    <property type="evidence" value="ECO:0007669"/>
    <property type="project" value="TreeGrafter"/>
</dbReference>
<dbReference type="GO" id="GO:0051301">
    <property type="term" value="P:cell division"/>
    <property type="evidence" value="ECO:0007669"/>
    <property type="project" value="UniProtKB-KW"/>
</dbReference>
<dbReference type="CDD" id="cd00118">
    <property type="entry name" value="LysM"/>
    <property type="match status" value="1"/>
</dbReference>
<dbReference type="CDD" id="cd12797">
    <property type="entry name" value="M23_peptidase"/>
    <property type="match status" value="1"/>
</dbReference>
<dbReference type="FunFam" id="3.10.350.10:FF:000008">
    <property type="entry name" value="Murein hydrolase activator NlpD"/>
    <property type="match status" value="1"/>
</dbReference>
<dbReference type="FunFam" id="2.70.70.10:FF:000004">
    <property type="entry name" value="NlpD family lipoprotein"/>
    <property type="match status" value="1"/>
</dbReference>
<dbReference type="Gene3D" id="2.70.70.10">
    <property type="entry name" value="Glucose Permease (Domain IIA)"/>
    <property type="match status" value="1"/>
</dbReference>
<dbReference type="Gene3D" id="3.10.350.10">
    <property type="entry name" value="LysM domain"/>
    <property type="match status" value="1"/>
</dbReference>
<dbReference type="InterPro" id="IPR050570">
    <property type="entry name" value="Cell_wall_metabolism_enzyme"/>
</dbReference>
<dbReference type="InterPro" id="IPR011055">
    <property type="entry name" value="Dup_hybrid_motif"/>
</dbReference>
<dbReference type="InterPro" id="IPR018392">
    <property type="entry name" value="LysM_dom"/>
</dbReference>
<dbReference type="InterPro" id="IPR036779">
    <property type="entry name" value="LysM_dom_sf"/>
</dbReference>
<dbReference type="InterPro" id="IPR016047">
    <property type="entry name" value="Peptidase_M23"/>
</dbReference>
<dbReference type="NCBIfam" id="NF008123">
    <property type="entry name" value="PRK10871.1"/>
    <property type="match status" value="1"/>
</dbReference>
<dbReference type="PANTHER" id="PTHR21666:SF263">
    <property type="entry name" value="MUREIN HYDROLASE ACTIVATOR NLPD"/>
    <property type="match status" value="1"/>
</dbReference>
<dbReference type="PANTHER" id="PTHR21666">
    <property type="entry name" value="PEPTIDASE-RELATED"/>
    <property type="match status" value="1"/>
</dbReference>
<dbReference type="Pfam" id="PF01476">
    <property type="entry name" value="LysM"/>
    <property type="match status" value="1"/>
</dbReference>
<dbReference type="Pfam" id="PF01551">
    <property type="entry name" value="Peptidase_M23"/>
    <property type="match status" value="1"/>
</dbReference>
<dbReference type="SMART" id="SM00257">
    <property type="entry name" value="LysM"/>
    <property type="match status" value="1"/>
</dbReference>
<dbReference type="SUPFAM" id="SSF51261">
    <property type="entry name" value="Duplicated hybrid motif"/>
    <property type="match status" value="1"/>
</dbReference>
<dbReference type="PROSITE" id="PS51782">
    <property type="entry name" value="LYSM"/>
    <property type="match status" value="1"/>
</dbReference>
<dbReference type="PROSITE" id="PS51257">
    <property type="entry name" value="PROKAR_LIPOPROTEIN"/>
    <property type="match status" value="1"/>
</dbReference>
<reference key="1">
    <citation type="journal article" date="1999" name="J. Bacteriol.">
        <title>Analysis of rpoS mRNA in Salmonella dublin: identification of multiple transcripts with growth-phase dependent variation in transcript stability.</title>
        <authorList>
            <person name="Paesold G."/>
            <person name="Krause M."/>
        </authorList>
    </citation>
    <scope>NUCLEOTIDE SEQUENCE [GENOMIC DNA]</scope>
    <scope>INDUCTION</scope>
    <source>
        <strain>Lane</strain>
    </source>
</reference>
<reference key="2">
    <citation type="submission" date="1994-10" db="EMBL/GenBank/DDBJ databases">
        <authorList>
            <person name="Krause M.W."/>
            <person name="El-Gedaily A."/>
        </authorList>
    </citation>
    <scope>NUCLEOTIDE SEQUENCE [GENOMIC DNA] OF 284-377</scope>
    <source>
        <strain>Lane</strain>
    </source>
</reference>
<keyword id="KW-0131">Cell cycle</keyword>
<keyword id="KW-0132">Cell division</keyword>
<keyword id="KW-0997">Cell inner membrane</keyword>
<keyword id="KW-1003">Cell membrane</keyword>
<keyword id="KW-0449">Lipoprotein</keyword>
<keyword id="KW-0472">Membrane</keyword>
<keyword id="KW-0564">Palmitate</keyword>
<keyword id="KW-0677">Repeat</keyword>
<keyword id="KW-0732">Signal</keyword>
<name>NLPD_SALDU</name>
<evidence type="ECO:0000250" key="1"/>
<evidence type="ECO:0000255" key="2">
    <source>
        <dbReference type="PROSITE-ProRule" id="PRU00303"/>
    </source>
</evidence>
<evidence type="ECO:0000255" key="3">
    <source>
        <dbReference type="PROSITE-ProRule" id="PRU01118"/>
    </source>
</evidence>
<evidence type="ECO:0000256" key="4">
    <source>
        <dbReference type="SAM" id="MobiDB-lite"/>
    </source>
</evidence>
<evidence type="ECO:0000305" key="5"/>
<protein>
    <recommendedName>
        <fullName>Murein hydrolase activator NlpD</fullName>
    </recommendedName>
</protein>
<organism>
    <name type="scientific">Salmonella dublin</name>
    <dbReference type="NCBI Taxonomy" id="98360"/>
    <lineage>
        <taxon>Bacteria</taxon>
        <taxon>Pseudomonadati</taxon>
        <taxon>Pseudomonadota</taxon>
        <taxon>Gammaproteobacteria</taxon>
        <taxon>Enterobacterales</taxon>
        <taxon>Enterobacteriaceae</taxon>
        <taxon>Salmonella</taxon>
    </lineage>
</organism>
<gene>
    <name type="primary">nlpD</name>
</gene>
<sequence>MSAGSPKFTVSRIAALSLVSLWLAGCTSSSNPPAPVTSVDSGSSSNTNSGMLITPPPKMGATTQQTPQQAPQIQPVQRPVTQPMQTQPVTEQPVQMENGRIVYNRQYGNIPKGSYTGGSTYTVKKGDTLFYIAWITGNDFRDLAQRNSISAPYSLNVGQTLQVGNASGMPITGGNAITQADAAQQGVVTRSAQNSTVAVASQPTITYSEGSGEQSANKMLPNNKPAGTVVTAPVTAPTVSTTEPNASSTSTSAPISAWRWPTDGKVIENFGASEGGNKGIDIAGSKGQAIVATADGRVVYAGNALRGYGNLIIIKHNDDYLSAYAHNDTMLVREQQEVKAGQKIATMGSTGTSSTRLHFEIRYKGKSVNPLRYLPQR</sequence>
<feature type="signal peptide" evidence="2">
    <location>
        <begin position="1"/>
        <end position="25"/>
    </location>
</feature>
<feature type="chain" id="PRO_0000018030" description="Murein hydrolase activator NlpD">
    <location>
        <begin position="26"/>
        <end position="377"/>
    </location>
</feature>
<feature type="domain" description="LysM" evidence="3">
    <location>
        <begin position="119"/>
        <end position="163"/>
    </location>
</feature>
<feature type="repeat" description="1">
    <location>
        <begin position="203"/>
        <end position="209"/>
    </location>
</feature>
<feature type="repeat" description="2">
    <location>
        <begin position="225"/>
        <end position="231"/>
    </location>
</feature>
<feature type="repeat" description="3">
    <location>
        <begin position="237"/>
        <end position="243"/>
    </location>
</feature>
<feature type="repeat" description="4">
    <location>
        <begin position="244"/>
        <end position="250"/>
    </location>
</feature>
<feature type="region of interest" description="Disordered" evidence="4">
    <location>
        <begin position="30"/>
        <end position="93"/>
    </location>
</feature>
<feature type="region of interest" description="4 X 7 AA approximate repeats">
    <location>
        <begin position="203"/>
        <end position="250"/>
    </location>
</feature>
<feature type="compositionally biased region" description="Low complexity" evidence="4">
    <location>
        <begin position="36"/>
        <end position="50"/>
    </location>
</feature>
<feature type="compositionally biased region" description="Low complexity" evidence="4">
    <location>
        <begin position="62"/>
        <end position="77"/>
    </location>
</feature>
<feature type="compositionally biased region" description="Polar residues" evidence="4">
    <location>
        <begin position="79"/>
        <end position="93"/>
    </location>
</feature>
<feature type="lipid moiety-binding region" description="N-palmitoyl cysteine" evidence="2">
    <location>
        <position position="26"/>
    </location>
</feature>
<feature type="lipid moiety-binding region" description="S-diacylglycerol cysteine" evidence="2">
    <location>
        <position position="26"/>
    </location>
</feature>